<feature type="chain" id="PRO_0000188563" description="Uncharacterized protein MJ1631">
    <location>
        <begin position="1"/>
        <end position="519"/>
    </location>
</feature>
<organism>
    <name type="scientific">Methanocaldococcus jannaschii (strain ATCC 43067 / DSM 2661 / JAL-1 / JCM 10045 / NBRC 100440)</name>
    <name type="common">Methanococcus jannaschii</name>
    <dbReference type="NCBI Taxonomy" id="243232"/>
    <lineage>
        <taxon>Archaea</taxon>
        <taxon>Methanobacteriati</taxon>
        <taxon>Methanobacteriota</taxon>
        <taxon>Methanomada group</taxon>
        <taxon>Methanococci</taxon>
        <taxon>Methanococcales</taxon>
        <taxon>Methanocaldococcaceae</taxon>
        <taxon>Methanocaldococcus</taxon>
    </lineage>
</organism>
<proteinExistence type="inferred from homology"/>
<accession>Q59025</accession>
<keyword id="KW-1185">Reference proteome</keyword>
<protein>
    <recommendedName>
        <fullName>Uncharacterized protein MJ1631</fullName>
    </recommendedName>
</protein>
<dbReference type="EMBL" id="L77117">
    <property type="protein sequence ID" value="AAB99652.1"/>
    <property type="molecule type" value="Genomic_DNA"/>
</dbReference>
<dbReference type="PIR" id="E64503">
    <property type="entry name" value="E64503"/>
</dbReference>
<dbReference type="RefSeq" id="WP_010871155.1">
    <property type="nucleotide sequence ID" value="NC_000909.1"/>
</dbReference>
<dbReference type="SMR" id="Q59025"/>
<dbReference type="FunCoup" id="Q59025">
    <property type="interactions" value="4"/>
</dbReference>
<dbReference type="STRING" id="243232.MJ_1631"/>
<dbReference type="CAZy" id="GT35">
    <property type="family name" value="Glycosyltransferase Family 35"/>
</dbReference>
<dbReference type="PaxDb" id="243232-MJ_1631"/>
<dbReference type="DNASU" id="1452540"/>
<dbReference type="EnsemblBacteria" id="AAB99652">
    <property type="protein sequence ID" value="AAB99652"/>
    <property type="gene ID" value="MJ_1631"/>
</dbReference>
<dbReference type="GeneID" id="1452540"/>
<dbReference type="KEGG" id="mja:MJ_1631"/>
<dbReference type="eggNOG" id="arCOG01421">
    <property type="taxonomic scope" value="Archaea"/>
</dbReference>
<dbReference type="HOGENOM" id="CLU_015112_1_0_2"/>
<dbReference type="InParanoid" id="Q59025"/>
<dbReference type="OrthoDB" id="17863at2157"/>
<dbReference type="PhylomeDB" id="Q59025"/>
<dbReference type="Proteomes" id="UP000000805">
    <property type="component" value="Chromosome"/>
</dbReference>
<dbReference type="GO" id="GO:0008184">
    <property type="term" value="F:glycogen phosphorylase activity"/>
    <property type="evidence" value="ECO:0007669"/>
    <property type="project" value="InterPro"/>
</dbReference>
<dbReference type="GO" id="GO:0030170">
    <property type="term" value="F:pyridoxal phosphate binding"/>
    <property type="evidence" value="ECO:0007669"/>
    <property type="project" value="InterPro"/>
</dbReference>
<dbReference type="GO" id="GO:0005975">
    <property type="term" value="P:carbohydrate metabolic process"/>
    <property type="evidence" value="ECO:0007669"/>
    <property type="project" value="InterPro"/>
</dbReference>
<dbReference type="Gene3D" id="3.40.50.2000">
    <property type="entry name" value="Glycogen Phosphorylase B"/>
    <property type="match status" value="2"/>
</dbReference>
<dbReference type="InterPro" id="IPR011834">
    <property type="entry name" value="Agluc_phsphrylas"/>
</dbReference>
<dbReference type="InterPro" id="IPR000811">
    <property type="entry name" value="Glyco_trans_35"/>
</dbReference>
<dbReference type="InterPro" id="IPR052182">
    <property type="entry name" value="Glycogen/Maltodextrin_Phosph"/>
</dbReference>
<dbReference type="NCBIfam" id="TIGR02094">
    <property type="entry name" value="more_P_ylases"/>
    <property type="match status" value="1"/>
</dbReference>
<dbReference type="PANTHER" id="PTHR42655">
    <property type="entry name" value="GLYCOGEN PHOSPHORYLASE"/>
    <property type="match status" value="1"/>
</dbReference>
<dbReference type="PANTHER" id="PTHR42655:SF1">
    <property type="entry name" value="GLYCOGEN PHOSPHORYLASE"/>
    <property type="match status" value="1"/>
</dbReference>
<dbReference type="Pfam" id="PF00343">
    <property type="entry name" value="Phosphorylase"/>
    <property type="match status" value="1"/>
</dbReference>
<dbReference type="SUPFAM" id="SSF53756">
    <property type="entry name" value="UDP-Glycosyltransferase/glycogen phosphorylase"/>
    <property type="match status" value="1"/>
</dbReference>
<comment type="similarity">
    <text evidence="1">Belongs to the glycogen phosphorylase family.</text>
</comment>
<evidence type="ECO:0000305" key="1"/>
<name>Y1631_METJA</name>
<reference key="1">
    <citation type="journal article" date="1996" name="Science">
        <title>Complete genome sequence of the methanogenic archaeon, Methanococcus jannaschii.</title>
        <authorList>
            <person name="Bult C.J."/>
            <person name="White O."/>
            <person name="Olsen G.J."/>
            <person name="Zhou L."/>
            <person name="Fleischmann R.D."/>
            <person name="Sutton G.G."/>
            <person name="Blake J.A."/>
            <person name="FitzGerald L.M."/>
            <person name="Clayton R.A."/>
            <person name="Gocayne J.D."/>
            <person name="Kerlavage A.R."/>
            <person name="Dougherty B.A."/>
            <person name="Tomb J.-F."/>
            <person name="Adams M.D."/>
            <person name="Reich C.I."/>
            <person name="Overbeek R."/>
            <person name="Kirkness E.F."/>
            <person name="Weinstock K.G."/>
            <person name="Merrick J.M."/>
            <person name="Glodek A."/>
            <person name="Scott J.L."/>
            <person name="Geoghagen N.S.M."/>
            <person name="Weidman J.F."/>
            <person name="Fuhrmann J.L."/>
            <person name="Nguyen D."/>
            <person name="Utterback T.R."/>
            <person name="Kelley J.M."/>
            <person name="Peterson J.D."/>
            <person name="Sadow P.W."/>
            <person name="Hanna M.C."/>
            <person name="Cotton M.D."/>
            <person name="Roberts K.M."/>
            <person name="Hurst M.A."/>
            <person name="Kaine B.P."/>
            <person name="Borodovsky M."/>
            <person name="Klenk H.-P."/>
            <person name="Fraser C.M."/>
            <person name="Smith H.O."/>
            <person name="Woese C.R."/>
            <person name="Venter J.C."/>
        </authorList>
    </citation>
    <scope>NUCLEOTIDE SEQUENCE [LARGE SCALE GENOMIC DNA]</scope>
    <source>
        <strain>ATCC 43067 / DSM 2661 / JAL-1 / JCM 10045 / NBRC 100440</strain>
    </source>
</reference>
<gene>
    <name type="ordered locus">MJ1631</name>
</gene>
<sequence length="519" mass="60470">MKPTAYFCMEFAIHQPLKTYAGGLGFLAGSHFRAAKRLNQPLVGVSILWSYGYYDQLRDREGKMKVEYIRKYYDFLEDIKLKVPVTINNNTVWVKAYKLEEDVFGTCPIYFLTTDIPENDDFSRTITHNLYDANNILHIAQQIVLGIGGYKVIKECENVKLFHMNEPHPLPLVFKLIEEYGLEYTREHTVFTTHTPLPEGNETQDINLLKSMGFFGNVDVKLAEKLGGNPFNYTVCALRVCKRANAVSKKHKEVCDRMWSWVKDRCEIVAITNAQDKYYWQDPVIREAAKKYDIDMLRERKMELKEILFEEVADQTGKIFKKDRLTVVWARRFTAYKRPHILLHDEMRLLELLKKKRIQVIWAGKPHPNDHNMIATFNWIVSKTRDMKGATILTGYELKLSKMLKQGSDIWLNTPKLNHEASGTSGMTASMNASIHMSTLDGWHVEWAKMYPDDSFTIGDGVRDDDAYVANCIYNLLEEVADMYDTERWWMKACNCVNHIVEYFDAERMAKEYAEKLYK</sequence>